<comment type="cofactor">
    <cofactor evidence="3">
        <name>[4Fe-4S] cluster</name>
        <dbReference type="ChEBI" id="CHEBI:49883"/>
    </cofactor>
    <text evidence="3">Binds 1 [4Fe-4S] cluster. The cluster is coordinated with 3 cysteines and an exchangeable S-adenosyl-L-methionine.</text>
</comment>
<comment type="subcellular location">
    <subcellularLocation>
        <location evidence="3">Cell membrane</location>
        <topology evidence="3">Multi-pass membrane protein</topology>
    </subcellularLocation>
</comment>
<organism>
    <name type="scientific">Mycobacterium tuberculosis (strain ATCC 25618 / H37Rv)</name>
    <dbReference type="NCBI Taxonomy" id="83332"/>
    <lineage>
        <taxon>Bacteria</taxon>
        <taxon>Bacillati</taxon>
        <taxon>Actinomycetota</taxon>
        <taxon>Actinomycetes</taxon>
        <taxon>Mycobacteriales</taxon>
        <taxon>Mycobacteriaceae</taxon>
        <taxon>Mycobacterium</taxon>
        <taxon>Mycobacterium tuberculosis complex</taxon>
    </lineage>
</organism>
<proteinExistence type="predicted"/>
<keyword id="KW-0004">4Fe-4S</keyword>
<keyword id="KW-1003">Cell membrane</keyword>
<keyword id="KW-0408">Iron</keyword>
<keyword id="KW-0411">Iron-sulfur</keyword>
<keyword id="KW-0472">Membrane</keyword>
<keyword id="KW-0479">Metal-binding</keyword>
<keyword id="KW-1185">Reference proteome</keyword>
<keyword id="KW-0949">S-adenosyl-L-methionine</keyword>
<keyword id="KW-0812">Transmembrane</keyword>
<keyword id="KW-1133">Transmembrane helix</keyword>
<accession>P9WL79</accession>
<accession>L0TBP0</accession>
<accession>P65023</accession>
<accession>Q50643</accession>
<dbReference type="EMBL" id="AL123456">
    <property type="protein sequence ID" value="CCP45374.1"/>
    <property type="molecule type" value="Genomic_DNA"/>
</dbReference>
<dbReference type="PIR" id="A70725">
    <property type="entry name" value="A70725"/>
</dbReference>
<dbReference type="RefSeq" id="NP_217094.1">
    <property type="nucleotide sequence ID" value="NC_000962.3"/>
</dbReference>
<dbReference type="RefSeq" id="WP_003413359.1">
    <property type="nucleotide sequence ID" value="NZ_NVQJ01000023.1"/>
</dbReference>
<dbReference type="STRING" id="83332.Rv2578c"/>
<dbReference type="PaxDb" id="83332-Rv2578c"/>
<dbReference type="DNASU" id="887427"/>
<dbReference type="GeneID" id="887427"/>
<dbReference type="KEGG" id="mtu:Rv2578c"/>
<dbReference type="KEGG" id="mtv:RVBD_2578c"/>
<dbReference type="TubercuList" id="Rv2578c"/>
<dbReference type="eggNOG" id="COG1533">
    <property type="taxonomic scope" value="Bacteria"/>
</dbReference>
<dbReference type="InParanoid" id="P9WL79"/>
<dbReference type="OrthoDB" id="9785699at2"/>
<dbReference type="PhylomeDB" id="P9WL79"/>
<dbReference type="Proteomes" id="UP000001584">
    <property type="component" value="Chromosome"/>
</dbReference>
<dbReference type="GO" id="GO:0005886">
    <property type="term" value="C:plasma membrane"/>
    <property type="evidence" value="ECO:0007669"/>
    <property type="project" value="UniProtKB-SubCell"/>
</dbReference>
<dbReference type="GO" id="GO:0051539">
    <property type="term" value="F:4 iron, 4 sulfur cluster binding"/>
    <property type="evidence" value="ECO:0007669"/>
    <property type="project" value="UniProtKB-KW"/>
</dbReference>
<dbReference type="GO" id="GO:0003824">
    <property type="term" value="F:catalytic activity"/>
    <property type="evidence" value="ECO:0007669"/>
    <property type="project" value="InterPro"/>
</dbReference>
<dbReference type="GO" id="GO:0046872">
    <property type="term" value="F:metal ion binding"/>
    <property type="evidence" value="ECO:0007669"/>
    <property type="project" value="UniProtKB-KW"/>
</dbReference>
<dbReference type="CDD" id="cd01335">
    <property type="entry name" value="Radical_SAM"/>
    <property type="match status" value="1"/>
</dbReference>
<dbReference type="Gene3D" id="3.80.30.30">
    <property type="match status" value="1"/>
</dbReference>
<dbReference type="InterPro" id="IPR006638">
    <property type="entry name" value="Elp3/MiaA/NifB-like_rSAM"/>
</dbReference>
<dbReference type="InterPro" id="IPR040086">
    <property type="entry name" value="MJ0683-like"/>
</dbReference>
<dbReference type="InterPro" id="IPR007197">
    <property type="entry name" value="rSAM"/>
</dbReference>
<dbReference type="NCBIfam" id="NF038135">
    <property type="entry name" value="rSAM_Rv2578c"/>
    <property type="match status" value="1"/>
</dbReference>
<dbReference type="PANTHER" id="PTHR43432">
    <property type="entry name" value="SLR0285 PROTEIN"/>
    <property type="match status" value="1"/>
</dbReference>
<dbReference type="PANTHER" id="PTHR43432:SF3">
    <property type="entry name" value="SLR0285 PROTEIN"/>
    <property type="match status" value="1"/>
</dbReference>
<dbReference type="Pfam" id="PF04055">
    <property type="entry name" value="Radical_SAM"/>
    <property type="match status" value="1"/>
</dbReference>
<dbReference type="SFLD" id="SFLDS00029">
    <property type="entry name" value="Radical_SAM"/>
    <property type="match status" value="1"/>
</dbReference>
<dbReference type="SFLD" id="SFLDG01084">
    <property type="entry name" value="Uncharacterised_Radical_SAM_Su"/>
    <property type="match status" value="1"/>
</dbReference>
<dbReference type="SMART" id="SM00729">
    <property type="entry name" value="Elp3"/>
    <property type="match status" value="1"/>
</dbReference>
<dbReference type="SUPFAM" id="SSF102114">
    <property type="entry name" value="Radical SAM enzymes"/>
    <property type="match status" value="1"/>
</dbReference>
<dbReference type="PROSITE" id="PS51918">
    <property type="entry name" value="RADICAL_SAM"/>
    <property type="match status" value="1"/>
</dbReference>
<feature type="chain" id="PRO_0000104061" description="Uncharacterized protein Rv2578c">
    <location>
        <begin position="1"/>
        <end position="340"/>
    </location>
</feature>
<feature type="transmembrane region" description="Helical" evidence="1">
    <location>
        <begin position="140"/>
        <end position="160"/>
    </location>
</feature>
<feature type="transmembrane region" description="Helical" evidence="1">
    <location>
        <begin position="243"/>
        <end position="263"/>
    </location>
</feature>
<feature type="domain" description="Radical SAM core" evidence="2">
    <location>
        <begin position="58"/>
        <end position="307"/>
    </location>
</feature>
<feature type="binding site" evidence="1">
    <location>
        <position position="72"/>
    </location>
    <ligand>
        <name>[4Fe-4S] cluster</name>
        <dbReference type="ChEBI" id="CHEBI:49883"/>
        <note>4Fe-4S-S-AdoMet</note>
    </ligand>
</feature>
<feature type="binding site" evidence="1">
    <location>
        <position position="76"/>
    </location>
    <ligand>
        <name>[4Fe-4S] cluster</name>
        <dbReference type="ChEBI" id="CHEBI:49883"/>
        <note>4Fe-4S-S-AdoMet</note>
    </ligand>
</feature>
<feature type="binding site" evidence="1">
    <location>
        <position position="79"/>
    </location>
    <ligand>
        <name>[4Fe-4S] cluster</name>
        <dbReference type="ChEBI" id="CHEBI:49883"/>
        <note>4Fe-4S-S-AdoMet</note>
    </ligand>
</feature>
<evidence type="ECO:0000255" key="1"/>
<evidence type="ECO:0000255" key="2">
    <source>
        <dbReference type="PROSITE-ProRule" id="PRU01266"/>
    </source>
</evidence>
<evidence type="ECO:0000305" key="3"/>
<sequence>MRWARQAVAVNGMPVDDGALPGLQRIGLVRSVRAPQFDGITFHEVLCKSALNKVPNAAALPFRYTVNGYRGCSHACRYCFARPTHEYLDFNPGTDFDTQVVVKTNVAAVLRHELRRPSWRRETVALGTNTDPYQRAEGRYALMPGIIGALAASGTPLSILTKGTLLRRDLPLIAEAAQQVPVSVAVSLAVGDPELHRDVESGTPTPQARLALITAIRAAGLDCHVMVAPVLPQLTDSGEHLDQLLGQIAAAGATGVTVFGLHLRGSTRGWFMCWLARAHPELVSRYRELYRRGPYLPPSYREMLRERVAPLIAKYRLAGDHRPAPPETEAALVPVQATLF</sequence>
<reference key="1">
    <citation type="journal article" date="1998" name="Nature">
        <title>Deciphering the biology of Mycobacterium tuberculosis from the complete genome sequence.</title>
        <authorList>
            <person name="Cole S.T."/>
            <person name="Brosch R."/>
            <person name="Parkhill J."/>
            <person name="Garnier T."/>
            <person name="Churcher C.M."/>
            <person name="Harris D.E."/>
            <person name="Gordon S.V."/>
            <person name="Eiglmeier K."/>
            <person name="Gas S."/>
            <person name="Barry C.E. III"/>
            <person name="Tekaia F."/>
            <person name="Badcock K."/>
            <person name="Basham D."/>
            <person name="Brown D."/>
            <person name="Chillingworth T."/>
            <person name="Connor R."/>
            <person name="Davies R.M."/>
            <person name="Devlin K."/>
            <person name="Feltwell T."/>
            <person name="Gentles S."/>
            <person name="Hamlin N."/>
            <person name="Holroyd S."/>
            <person name="Hornsby T."/>
            <person name="Jagels K."/>
            <person name="Krogh A."/>
            <person name="McLean J."/>
            <person name="Moule S."/>
            <person name="Murphy L.D."/>
            <person name="Oliver S."/>
            <person name="Osborne J."/>
            <person name="Quail M.A."/>
            <person name="Rajandream M.A."/>
            <person name="Rogers J."/>
            <person name="Rutter S."/>
            <person name="Seeger K."/>
            <person name="Skelton S."/>
            <person name="Squares S."/>
            <person name="Squares R."/>
            <person name="Sulston J.E."/>
            <person name="Taylor K."/>
            <person name="Whitehead S."/>
            <person name="Barrell B.G."/>
        </authorList>
    </citation>
    <scope>NUCLEOTIDE SEQUENCE [LARGE SCALE GENOMIC DNA]</scope>
    <source>
        <strain>ATCC 25618 / H37Rv</strain>
    </source>
</reference>
<gene>
    <name type="ordered locus">Rv2578c</name>
    <name type="ORF">MTCY227.23</name>
</gene>
<protein>
    <recommendedName>
        <fullName>Uncharacterized protein Rv2578c</fullName>
    </recommendedName>
</protein>
<name>Y2578_MYCTU</name>